<dbReference type="EC" id="3.4.22.-" evidence="7 10 13 14"/>
<dbReference type="EMBL" id="LN999945">
    <property type="protein sequence ID" value="CZT98814.1"/>
    <property type="molecule type" value="Genomic_DNA"/>
</dbReference>
<dbReference type="RefSeq" id="XP_001347833.1">
    <property type="nucleotide sequence ID" value="XM_001347797.1"/>
</dbReference>
<dbReference type="PDB" id="3BPM">
    <property type="method" value="X-ray"/>
    <property type="resolution" value="2.50 A"/>
    <property type="chains" value="A/B=250-492"/>
</dbReference>
<dbReference type="PDB" id="3BWK">
    <property type="method" value="X-ray"/>
    <property type="resolution" value="2.42 A"/>
    <property type="chains" value="A/B/C/D=250-492"/>
</dbReference>
<dbReference type="PDBsum" id="3BPM"/>
<dbReference type="PDBsum" id="3BWK"/>
<dbReference type="SMR" id="Q8IIL0"/>
<dbReference type="STRING" id="36329.Q8IIL0"/>
<dbReference type="BindingDB" id="Q8IIL0"/>
<dbReference type="ChEMBL" id="CHEMBL1250373"/>
<dbReference type="MEROPS" id="C01.063"/>
<dbReference type="SwissPalm" id="Q8IIL0"/>
<dbReference type="PaxDb" id="5833-PF11_0162"/>
<dbReference type="EnsemblProtists" id="CZT98814">
    <property type="protein sequence ID" value="CZT98814"/>
    <property type="gene ID" value="PF3D7_1115400"/>
</dbReference>
<dbReference type="GeneID" id="810709"/>
<dbReference type="KEGG" id="pfa:PF3D7_1115400"/>
<dbReference type="VEuPathDB" id="PlasmoDB:PF3D7_1115400"/>
<dbReference type="HOGENOM" id="CLU_012184_1_2_1"/>
<dbReference type="InParanoid" id="Q8IIL0"/>
<dbReference type="OMA" id="NGYRKPC"/>
<dbReference type="OrthoDB" id="190265at2759"/>
<dbReference type="PhylomeDB" id="Q8IIL0"/>
<dbReference type="Reactome" id="R-PFA-2132295">
    <property type="pathway name" value="MHC class II antigen presentation"/>
</dbReference>
<dbReference type="Reactome" id="R-PFA-6798695">
    <property type="pathway name" value="Neutrophil degranulation"/>
</dbReference>
<dbReference type="EvolutionaryTrace" id="Q8IIL0"/>
<dbReference type="Proteomes" id="UP000001450">
    <property type="component" value="Chromosome 11"/>
</dbReference>
<dbReference type="GO" id="GO:0030659">
    <property type="term" value="C:cytoplasmic vesicle membrane"/>
    <property type="evidence" value="ECO:0007669"/>
    <property type="project" value="UniProtKB-SubCell"/>
</dbReference>
<dbReference type="GO" id="GO:0005615">
    <property type="term" value="C:extracellular space"/>
    <property type="evidence" value="ECO:0000318"/>
    <property type="project" value="GO_Central"/>
</dbReference>
<dbReference type="GO" id="GO:0020020">
    <property type="term" value="C:food vacuole"/>
    <property type="evidence" value="ECO:0000304"/>
    <property type="project" value="GeneDB"/>
</dbReference>
<dbReference type="GO" id="GO:0005764">
    <property type="term" value="C:lysosome"/>
    <property type="evidence" value="ECO:0000318"/>
    <property type="project" value="GO_Central"/>
</dbReference>
<dbReference type="GO" id="GO:0004197">
    <property type="term" value="F:cysteine-type endopeptidase activity"/>
    <property type="evidence" value="ECO:0000314"/>
    <property type="project" value="GeneDB"/>
</dbReference>
<dbReference type="GO" id="GO:0042540">
    <property type="term" value="P:hemoglobin catabolic process"/>
    <property type="evidence" value="ECO:0000314"/>
    <property type="project" value="GeneDB"/>
</dbReference>
<dbReference type="GO" id="GO:0006508">
    <property type="term" value="P:proteolysis"/>
    <property type="evidence" value="ECO:0000314"/>
    <property type="project" value="GeneDB"/>
</dbReference>
<dbReference type="GO" id="GO:0051603">
    <property type="term" value="P:proteolysis involved in protein catabolic process"/>
    <property type="evidence" value="ECO:0000318"/>
    <property type="project" value="GO_Central"/>
</dbReference>
<dbReference type="CDD" id="cd02248">
    <property type="entry name" value="Peptidase_C1A"/>
    <property type="match status" value="1"/>
</dbReference>
<dbReference type="FunFam" id="3.90.70.10:FF:000086">
    <property type="entry name" value="Cysteine proteinase falcipain 2a"/>
    <property type="match status" value="1"/>
</dbReference>
<dbReference type="Gene3D" id="1.10.287.2250">
    <property type="match status" value="1"/>
</dbReference>
<dbReference type="Gene3D" id="3.90.70.10">
    <property type="entry name" value="Cysteine proteinases"/>
    <property type="match status" value="1"/>
</dbReference>
<dbReference type="InterPro" id="IPR038765">
    <property type="entry name" value="Papain-like_cys_pep_sf"/>
</dbReference>
<dbReference type="InterPro" id="IPR000169">
    <property type="entry name" value="Pept_cys_AS"/>
</dbReference>
<dbReference type="InterPro" id="IPR013128">
    <property type="entry name" value="Peptidase_C1A"/>
</dbReference>
<dbReference type="InterPro" id="IPR000668">
    <property type="entry name" value="Peptidase_C1A_C"/>
</dbReference>
<dbReference type="InterPro" id="IPR039417">
    <property type="entry name" value="Peptidase_C1A_papain-like"/>
</dbReference>
<dbReference type="InterPro" id="IPR013201">
    <property type="entry name" value="Prot_inhib_I29"/>
</dbReference>
<dbReference type="PANTHER" id="PTHR12411">
    <property type="entry name" value="CYSTEINE PROTEASE FAMILY C1-RELATED"/>
    <property type="match status" value="1"/>
</dbReference>
<dbReference type="Pfam" id="PF08246">
    <property type="entry name" value="Inhibitor_I29"/>
    <property type="match status" value="1"/>
</dbReference>
<dbReference type="Pfam" id="PF00112">
    <property type="entry name" value="Peptidase_C1"/>
    <property type="match status" value="1"/>
</dbReference>
<dbReference type="PRINTS" id="PR00705">
    <property type="entry name" value="PAPAIN"/>
</dbReference>
<dbReference type="SMART" id="SM00848">
    <property type="entry name" value="Inhibitor_I29"/>
    <property type="match status" value="1"/>
</dbReference>
<dbReference type="SMART" id="SM00645">
    <property type="entry name" value="Pept_C1"/>
    <property type="match status" value="1"/>
</dbReference>
<dbReference type="SUPFAM" id="SSF54001">
    <property type="entry name" value="Cysteine proteinases"/>
    <property type="match status" value="1"/>
</dbReference>
<dbReference type="PROSITE" id="PS00139">
    <property type="entry name" value="THIOL_PROTEASE_CYS"/>
    <property type="match status" value="1"/>
</dbReference>
<sequence>MEYHMEYSPNEVIKQEREVFVGKEKSGSKFKRKRSIFIVLTVSICFMFALMLFYFTRNENNKTLFTNSLSNNINDDYIINSLLKSESGKKFIVSKLEELISSYDKEKKMRTTGAEENNMNMNGIDDKDNKSVSFVNKKNGNLKVNNNNQVSYSNLFDTKFLMDNLETVNLFYIFLKENNKKYETSEEMQKRFIIFSENYRKIELHNKKTNSLYKRGMNKFGDLSPEEFRSKYLNLKTHGPFKTLSPPVSYEANYEDVIKKYKPADAKLDRIAYDWRLHGGVTPVKDQALCGSCWAFSSVGSVESQYAIRKKALFLFSEQELVDCSVKNNGCYGGYITNAFDDMIDLGGLCSQDDYPYVSNLPETCNLKRCNERYTIKSYVSIPDDKFKEALRYLGPISISIAASDDFAFYRGGFYDGECGAAPNHAVILVGYGMKDIYNEDTGRMEKFYYYIIKNSWGSDWGEGGYINLETDENGYKKTCSIGTEAYVPLLE</sequence>
<reference evidence="19" key="1">
    <citation type="journal article" date="2002" name="Nature">
        <title>Genome sequence of the human malaria parasite Plasmodium falciparum.</title>
        <authorList>
            <person name="Gardner M.J."/>
            <person name="Hall N."/>
            <person name="Fung E."/>
            <person name="White O."/>
            <person name="Berriman M."/>
            <person name="Hyman R.W."/>
            <person name="Carlton J.M."/>
            <person name="Pain A."/>
            <person name="Nelson K.E."/>
            <person name="Bowman S."/>
            <person name="Paulsen I.T."/>
            <person name="James K.D."/>
            <person name="Eisen J.A."/>
            <person name="Rutherford K.M."/>
            <person name="Salzberg S.L."/>
            <person name="Craig A."/>
            <person name="Kyes S."/>
            <person name="Chan M.-S."/>
            <person name="Nene V."/>
            <person name="Shallom S.J."/>
            <person name="Suh B."/>
            <person name="Peterson J."/>
            <person name="Angiuoli S."/>
            <person name="Pertea M."/>
            <person name="Allen J."/>
            <person name="Selengut J."/>
            <person name="Haft D."/>
            <person name="Mather M.W."/>
            <person name="Vaidya A.B."/>
            <person name="Martin D.M.A."/>
            <person name="Fairlamb A.H."/>
            <person name="Fraunholz M.J."/>
            <person name="Roos D.S."/>
            <person name="Ralph S.A."/>
            <person name="McFadden G.I."/>
            <person name="Cummings L.M."/>
            <person name="Subramanian G.M."/>
            <person name="Mungall C."/>
            <person name="Venter J.C."/>
            <person name="Carucci D.J."/>
            <person name="Hoffman S.L."/>
            <person name="Newbold C."/>
            <person name="Davis R.W."/>
            <person name="Fraser C.M."/>
            <person name="Barrell B.G."/>
        </authorList>
    </citation>
    <scope>NUCLEOTIDE SEQUENCE [LARGE SCALE GENOMIC DNA]</scope>
    <source>
        <strain evidence="19">3D7</strain>
    </source>
</reference>
<reference evidence="16" key="2">
    <citation type="journal article" date="2001" name="Biochem. J.">
        <title>Expression and characterization of the Plasmodium falciparum haemoglobinase falcipain-3.</title>
        <authorList>
            <person name="Sijwali P.S."/>
            <person name="Shenai B.R."/>
            <person name="Gut J."/>
            <person name="Singh A."/>
            <person name="Rosenthal P.J."/>
        </authorList>
    </citation>
    <scope>FUNCTION</scope>
    <scope>CATALYTIC ACTIVITY</scope>
    <scope>BIOPHYSICOCHEMICAL PROPERTIES</scope>
    <scope>SUBCELLULAR LOCATION</scope>
    <scope>DEVELOPMENTAL STAGE</scope>
    <scope>PROTEOLYTIC CLEAVAGE</scope>
    <source>
        <strain evidence="15">W2</strain>
    </source>
</reference>
<reference evidence="16" key="3">
    <citation type="journal article" date="2005" name="Mol. Biochem. Parasitol.">
        <title>Biosynthesis, localization, and processing of falcipain cysteine proteases of Plasmodium falciparum.</title>
        <authorList>
            <person name="Dahl E.L."/>
            <person name="Rosenthal P.J."/>
        </authorList>
    </citation>
    <scope>SUBCELLULAR LOCATION</scope>
    <scope>DEVELOPMENTAL STAGE</scope>
    <scope>PROTEOLYTIC CLEAVAGE</scope>
</reference>
<reference evidence="16" key="4">
    <citation type="journal article" date="2006" name="Mol. Biochem. Parasitol.">
        <title>Gene disruptions demonstrate independent roles for the four falcipain cysteine proteases of Plasmodium falciparum.</title>
        <authorList>
            <person name="Sijwali P.S."/>
            <person name="Koo J."/>
            <person name="Singh N."/>
            <person name="Rosenthal P.J."/>
        </authorList>
    </citation>
    <scope>DISRUPTION PHENOTYPE</scope>
</reference>
<reference evidence="16" key="5">
    <citation type="journal article" date="2006" name="PLoS Pathog.">
        <title>Falstatin, a cysteine protease inhibitor of Plasmodium falciparum, facilitates erythrocyte invasion.</title>
        <authorList>
            <person name="Pandey K.C."/>
            <person name="Singh N."/>
            <person name="Arastu-Kapur S."/>
            <person name="Bogyo M."/>
            <person name="Rosenthal P.J."/>
        </authorList>
    </citation>
    <scope>CATALYTIC ACTIVITY</scope>
    <scope>ACTIVITY REGULATION</scope>
</reference>
<reference evidence="16" key="6">
    <citation type="journal article" date="2007" name="J. Biol. Chem.">
        <title>Falcipain cysteine proteases require bipartite motifs for trafficking to the Plasmodium falciparum food vacuole.</title>
        <authorList>
            <person name="Subramanian S."/>
            <person name="Sijwali P.S."/>
            <person name="Rosenthal P.J."/>
        </authorList>
    </citation>
    <scope>SUBCELLULAR LOCATION</scope>
</reference>
<reference evidence="16" key="7">
    <citation type="journal article" date="2009" name="PLoS ONE">
        <title>Hemoglobin cleavage site-specificity of the Plasmodium falciparum cysteine proteases falcipain-2 and falcipain-3.</title>
        <authorList>
            <person name="Subramanian S."/>
            <person name="Hardt M."/>
            <person name="Choe Y."/>
            <person name="Niles R.K."/>
            <person name="Johansen E.B."/>
            <person name="Legac J."/>
            <person name="Gut J."/>
            <person name="Kerr I.D."/>
            <person name="Craik C.S."/>
            <person name="Rosenthal P.J."/>
        </authorList>
    </citation>
    <scope>FUNCTION</scope>
    <scope>CATALYTIC ACTIVITY</scope>
</reference>
<reference evidence="21" key="8">
    <citation type="journal article" date="2009" name="J. Biol. Chem.">
        <title>Vinyl sulfones as antiparasitic agents and a structural basis for drug design.</title>
        <authorList>
            <person name="Kerr I.D."/>
            <person name="Lee J.H."/>
            <person name="Farady C.J."/>
            <person name="Marion R."/>
            <person name="Rickert M."/>
            <person name="Sajid M."/>
            <person name="Pandey K.C."/>
            <person name="Caffrey C.R."/>
            <person name="Legac J."/>
            <person name="Hansell E."/>
            <person name="McKerrow J.H."/>
            <person name="Craik C.S."/>
            <person name="Rosenthal P.J."/>
            <person name="Brinen L.S."/>
        </authorList>
    </citation>
    <scope>X-RAY CRYSTALLOGRAPHY (2.42 ANGSTROMS) OF 250-492 IN COMPLEX WITH INHIBITOR</scope>
    <scope>CATALYTIC ACTIVITY</scope>
    <scope>DISULFIDE BONDS</scope>
</reference>
<reference evidence="20" key="9">
    <citation type="journal article" date="2009" name="J. Med. Chem.">
        <title>Structures of falcipain-2 and falcipain-3 bound to small molecule inhibitors: implications for substrate specificity.</title>
        <authorList>
            <person name="Kerr I.D."/>
            <person name="Lee J.H."/>
            <person name="Pandey K.C."/>
            <person name="Harrison A."/>
            <person name="Sajid M."/>
            <person name="Rosenthal P.J."/>
            <person name="Brinen L.S."/>
        </authorList>
    </citation>
    <scope>X-RAY CRYSTALLOGRAPHY (2.50 ANGSTROMS) OF 250-492 IN COMPLEX WITH INHIBITOR</scope>
    <scope>DISULFIDE BONDS</scope>
</reference>
<gene>
    <name evidence="16" type="primary">FP3</name>
    <name evidence="15" type="synonym">FP-3</name>
    <name evidence="18" type="ORF">PF3D7_1115400</name>
</gene>
<protein>
    <recommendedName>
        <fullName evidence="15">Falcipain-3</fullName>
        <ecNumber evidence="7 10 13 14">3.4.22.-</ecNumber>
    </recommendedName>
    <alternativeName>
        <fullName evidence="15">Cysteine proteinase falcipain-3</fullName>
    </alternativeName>
</protein>
<keyword id="KW-0002">3D-structure</keyword>
<keyword id="KW-0968">Cytoplasmic vesicle</keyword>
<keyword id="KW-1015">Disulfide bond</keyword>
<keyword id="KW-0325">Glycoprotein</keyword>
<keyword id="KW-0378">Hydrolase</keyword>
<keyword id="KW-0472">Membrane</keyword>
<keyword id="KW-0645">Protease</keyword>
<keyword id="KW-1185">Reference proteome</keyword>
<keyword id="KW-0735">Signal-anchor</keyword>
<keyword id="KW-0788">Thiol protease</keyword>
<keyword id="KW-0812">Transmembrane</keyword>
<keyword id="KW-1133">Transmembrane helix</keyword>
<keyword id="KW-0926">Vacuole</keyword>
<keyword id="KW-0865">Zymogen</keyword>
<feature type="propeptide" id="PRO_0000459160" description="Activation peptide" evidence="7">
    <location>
        <begin position="1"/>
        <end position="242"/>
    </location>
</feature>
<feature type="chain" id="PRO_0000459161" description="Falcipain-3">
    <location>
        <begin position="243"/>
        <end position="492"/>
    </location>
</feature>
<feature type="topological domain" description="Cytoplasmic" evidence="16">
    <location>
        <begin position="1"/>
        <end position="35"/>
    </location>
</feature>
<feature type="transmembrane region" description="Helical; Signal-anchor for type II membrane protein" evidence="2">
    <location>
        <begin position="36"/>
        <end position="56"/>
    </location>
</feature>
<feature type="topological domain" description="Lumenal" evidence="16">
    <location>
        <begin position="57"/>
        <end position="492"/>
    </location>
</feature>
<feature type="short sequence motif" description="Bipartite vacuolar targeting signal 1" evidence="1">
    <location>
        <begin position="16"/>
        <end position="25"/>
    </location>
</feature>
<feature type="short sequence motif" description="Bipartite vacuolar targeting signal 2" evidence="1">
    <location>
        <begin position="84"/>
        <end position="105"/>
    </location>
</feature>
<feature type="short sequence motif" description="Nose motif; required for the correct folding of the mature form" evidence="1">
    <location>
        <begin position="251"/>
        <end position="268"/>
    </location>
</feature>
<feature type="short sequence motif" description="Arm motif; binds to host hemoglobin and required for the inhibitory interaction between the propeptide and the catalytic domain" evidence="1">
    <location>
        <begin position="436"/>
        <end position="445"/>
    </location>
</feature>
<feature type="active site" evidence="4">
    <location>
        <position position="293"/>
    </location>
</feature>
<feature type="active site" evidence="5">
    <location>
        <position position="425"/>
    </location>
</feature>
<feature type="active site" evidence="6">
    <location>
        <position position="455"/>
    </location>
</feature>
<feature type="site" description="Cleavage; by autolysis" evidence="7">
    <location>
        <begin position="242"/>
        <end position="243"/>
    </location>
</feature>
<feature type="glycosylation site" description="N-linked (GlcNAc...) asparagine" evidence="3">
    <location>
        <position position="61"/>
    </location>
</feature>
<feature type="glycosylation site" description="N-linked (GlcNAc...) asparagine" evidence="3">
    <location>
        <position position="129"/>
    </location>
</feature>
<feature type="disulfide bond" evidence="12 14 20 21">
    <location>
        <begin position="290"/>
        <end position="331"/>
    </location>
</feature>
<feature type="disulfide bond" evidence="12 14 20 21">
    <location>
        <begin position="324"/>
        <end position="365"/>
    </location>
</feature>
<feature type="disulfide bond" evidence="12 14 20 21">
    <location>
        <begin position="350"/>
        <end position="370"/>
    </location>
</feature>
<feature type="disulfide bond" evidence="12 14 20 21">
    <location>
        <begin position="419"/>
        <end position="480"/>
    </location>
</feature>
<feature type="helix" evidence="23">
    <location>
        <begin position="254"/>
        <end position="261"/>
    </location>
</feature>
<feature type="helix" evidence="23">
    <location>
        <begin position="275"/>
        <end position="277"/>
    </location>
</feature>
<feature type="strand" evidence="22">
    <location>
        <begin position="289"/>
        <end position="291"/>
    </location>
</feature>
<feature type="helix" evidence="23">
    <location>
        <begin position="293"/>
        <end position="310"/>
    </location>
</feature>
<feature type="helix" evidence="23">
    <location>
        <begin position="318"/>
        <end position="324"/>
    </location>
</feature>
<feature type="helix" evidence="23">
    <location>
        <begin position="330"/>
        <end position="332"/>
    </location>
</feature>
<feature type="helix" evidence="23">
    <location>
        <begin position="336"/>
        <end position="345"/>
    </location>
</feature>
<feature type="strand" evidence="22">
    <location>
        <begin position="349"/>
        <end position="351"/>
    </location>
</feature>
<feature type="turn" evidence="23">
    <location>
        <begin position="352"/>
        <end position="354"/>
    </location>
</feature>
<feature type="helix" evidence="23">
    <location>
        <begin position="367"/>
        <end position="369"/>
    </location>
</feature>
<feature type="strand" evidence="22">
    <location>
        <begin position="371"/>
        <end position="374"/>
    </location>
</feature>
<feature type="strand" evidence="23">
    <location>
        <begin position="378"/>
        <end position="381"/>
    </location>
</feature>
<feature type="helix" evidence="23">
    <location>
        <begin position="387"/>
        <end position="393"/>
    </location>
</feature>
<feature type="strand" evidence="23">
    <location>
        <begin position="397"/>
        <end position="401"/>
    </location>
</feature>
<feature type="helix" evidence="23">
    <location>
        <begin position="405"/>
        <end position="408"/>
    </location>
</feature>
<feature type="strand" evidence="23">
    <location>
        <begin position="412"/>
        <end position="414"/>
    </location>
</feature>
<feature type="strand" evidence="23">
    <location>
        <begin position="425"/>
        <end position="438"/>
    </location>
</feature>
<feature type="turn" evidence="23">
    <location>
        <begin position="440"/>
        <end position="442"/>
    </location>
</feature>
<feature type="strand" evidence="23">
    <location>
        <begin position="444"/>
        <end position="454"/>
    </location>
</feature>
<feature type="strand" evidence="23">
    <location>
        <begin position="466"/>
        <end position="471"/>
    </location>
</feature>
<feature type="strand" evidence="23">
    <location>
        <begin position="473"/>
        <end position="475"/>
    </location>
</feature>
<feature type="turn" evidence="23">
    <location>
        <begin position="480"/>
        <end position="483"/>
    </location>
</feature>
<feature type="strand" evidence="23">
    <location>
        <begin position="484"/>
        <end position="490"/>
    </location>
</feature>
<comment type="function">
    <text evidence="7 13">Cysteine protease which cleaves native host hemoglobin and globin in the food vacuole during the asexual blood stage (PubMed:11716777, PubMed:19357776). Preferentially cleaves substrates which have an arginine at the P1 position and a leucine at the P2 position (PubMed:19357776).</text>
</comment>
<comment type="activity regulation">
    <text evidence="10">Inhibited by cysteine protease inhibitor ICP.</text>
</comment>
<comment type="biophysicochemical properties">
    <phDependence>
        <text evidence="7">Optimum pH is 5.5.</text>
    </phDependence>
</comment>
<comment type="subcellular location">
    <subcellularLocation>
        <location evidence="7 11">Membrane</location>
        <topology evidence="16">Single-pass type II membrane protein</topology>
    </subcellularLocation>
    <subcellularLocation>
        <location evidence="7 8 11">Vacuole</location>
    </subcellularLocation>
    <subcellularLocation>
        <location evidence="11 17">Cytoplasmic vesicle membrane</location>
    </subcellularLocation>
    <text evidence="7 8 11">In mature trophozoites, localization is diffused throughout the cytoplasm (PubMed:15664655). In late trophozoites, the mature form localizes to the digestive (or food) vacuole, an acidic vacuole where host hemoglobin is digested (PubMed:11716777, PubMed:15664655, PubMed:17565983). The proenzyme localizes to the membrane (PubMed:11716777).</text>
</comment>
<comment type="developmental stage">
    <text evidence="7 8">During the asexual blood stage, expression begins in early trophozoites and peaks in late trophozoites and early schizonts, expression decreases in late schizonts (at protein level).</text>
</comment>
<comment type="PTM">
    <text evidence="7 8">Auto-cleavage occurs at acidic pH (PubMed:11716777). The proenzyme is the predominant form in late trophozoites and both the pro and mature enzyme are present in schizonts (PubMed:15664655).</text>
</comment>
<comment type="disruption phenotype">
    <text evidence="9">Lethal at the asexual blood stage.</text>
</comment>
<comment type="similarity">
    <text evidence="16">Belongs to the peptidase C1 family.</text>
</comment>
<evidence type="ECO:0000250" key="1">
    <source>
        <dbReference type="UniProtKB" id="Q8I6U4"/>
    </source>
</evidence>
<evidence type="ECO:0000255" key="2"/>
<evidence type="ECO:0000255" key="3">
    <source>
        <dbReference type="PROSITE-ProRule" id="PRU00498"/>
    </source>
</evidence>
<evidence type="ECO:0000255" key="4">
    <source>
        <dbReference type="PROSITE-ProRule" id="PRU10088"/>
    </source>
</evidence>
<evidence type="ECO:0000255" key="5">
    <source>
        <dbReference type="PROSITE-ProRule" id="PRU10089"/>
    </source>
</evidence>
<evidence type="ECO:0000255" key="6">
    <source>
        <dbReference type="PROSITE-ProRule" id="PRU10090"/>
    </source>
</evidence>
<evidence type="ECO:0000269" key="7">
    <source>
    </source>
</evidence>
<evidence type="ECO:0000269" key="8">
    <source>
    </source>
</evidence>
<evidence type="ECO:0000269" key="9">
    <source>
    </source>
</evidence>
<evidence type="ECO:0000269" key="10">
    <source>
    </source>
</evidence>
<evidence type="ECO:0000269" key="11">
    <source>
    </source>
</evidence>
<evidence type="ECO:0000269" key="12">
    <source>
    </source>
</evidence>
<evidence type="ECO:0000269" key="13">
    <source>
    </source>
</evidence>
<evidence type="ECO:0000269" key="14">
    <source>
    </source>
</evidence>
<evidence type="ECO:0000303" key="15">
    <source>
    </source>
</evidence>
<evidence type="ECO:0000305" key="16"/>
<evidence type="ECO:0000305" key="17">
    <source>
    </source>
</evidence>
<evidence type="ECO:0000312" key="18">
    <source>
        <dbReference type="EMBL" id="CZT98814.1"/>
    </source>
</evidence>
<evidence type="ECO:0000312" key="19">
    <source>
        <dbReference type="Proteomes" id="UP000001450"/>
    </source>
</evidence>
<evidence type="ECO:0007744" key="20">
    <source>
        <dbReference type="PDB" id="3BPM"/>
    </source>
</evidence>
<evidence type="ECO:0007744" key="21">
    <source>
        <dbReference type="PDB" id="3BWK"/>
    </source>
</evidence>
<evidence type="ECO:0007829" key="22">
    <source>
        <dbReference type="PDB" id="3BPM"/>
    </source>
</evidence>
<evidence type="ECO:0007829" key="23">
    <source>
        <dbReference type="PDB" id="3BWK"/>
    </source>
</evidence>
<accession>Q8IIL0</accession>
<organism evidence="19">
    <name type="scientific">Plasmodium falciparum (isolate 3D7)</name>
    <dbReference type="NCBI Taxonomy" id="36329"/>
    <lineage>
        <taxon>Eukaryota</taxon>
        <taxon>Sar</taxon>
        <taxon>Alveolata</taxon>
        <taxon>Apicomplexa</taxon>
        <taxon>Aconoidasida</taxon>
        <taxon>Haemosporida</taxon>
        <taxon>Plasmodiidae</taxon>
        <taxon>Plasmodium</taxon>
        <taxon>Plasmodium (Laverania)</taxon>
    </lineage>
</organism>
<name>FPC3_PLAF7</name>
<proteinExistence type="evidence at protein level"/>